<protein>
    <recommendedName>
        <fullName evidence="1">Translation initiation factor IF-3</fullName>
    </recommendedName>
</protein>
<sequence>MKGGKRVQLTRPNRINSEIRAIKVRLTGVEGDQIGIVNLREALKKSEELGLDLVEISPNAEPPVCRIMDYGKFLYEKSKSSKEQKKKQKVIHIKEIKFRPGTDEGDYQVKLRNLIRFLEDGDKAKITLRFRGREMAHQKIGVDVLNRVKNDLIELATVEYFPSKIEGRQMIMILAPKKK</sequence>
<accession>B8D8S7</accession>
<name>IF3_BUCA5</name>
<comment type="function">
    <text evidence="1">IF-3 binds to the 30S ribosomal subunit and shifts the equilibrium between 70S ribosomes and their 50S and 30S subunits in favor of the free subunits, thus enhancing the availability of 30S subunits on which protein synthesis initiation begins.</text>
</comment>
<comment type="subunit">
    <text evidence="1">Monomer.</text>
</comment>
<comment type="subcellular location">
    <subcellularLocation>
        <location evidence="1">Cytoplasm</location>
    </subcellularLocation>
</comment>
<comment type="similarity">
    <text evidence="1">Belongs to the IF-3 family.</text>
</comment>
<keyword id="KW-0963">Cytoplasm</keyword>
<keyword id="KW-0396">Initiation factor</keyword>
<keyword id="KW-0648">Protein biosynthesis</keyword>
<feature type="chain" id="PRO_1000118262" description="Translation initiation factor IF-3">
    <location>
        <begin position="1"/>
        <end position="179"/>
    </location>
</feature>
<evidence type="ECO:0000255" key="1">
    <source>
        <dbReference type="HAMAP-Rule" id="MF_00080"/>
    </source>
</evidence>
<proteinExistence type="inferred from homology"/>
<reference key="1">
    <citation type="journal article" date="2009" name="Science">
        <title>The dynamics and time scale of ongoing genomic erosion in symbiotic bacteria.</title>
        <authorList>
            <person name="Moran N.A."/>
            <person name="McLaughlin H.J."/>
            <person name="Sorek R."/>
        </authorList>
    </citation>
    <scope>NUCLEOTIDE SEQUENCE [LARGE SCALE GENOMIC DNA]</scope>
    <source>
        <strain>5A</strain>
    </source>
</reference>
<gene>
    <name evidence="1" type="primary">infC</name>
    <name type="ordered locus">BUAP5A_124</name>
</gene>
<organism>
    <name type="scientific">Buchnera aphidicola subsp. Acyrthosiphon pisum (strain 5A)</name>
    <dbReference type="NCBI Taxonomy" id="563178"/>
    <lineage>
        <taxon>Bacteria</taxon>
        <taxon>Pseudomonadati</taxon>
        <taxon>Pseudomonadota</taxon>
        <taxon>Gammaproteobacteria</taxon>
        <taxon>Enterobacterales</taxon>
        <taxon>Erwiniaceae</taxon>
        <taxon>Buchnera</taxon>
    </lineage>
</organism>
<dbReference type="EMBL" id="CP001161">
    <property type="protein sequence ID" value="ACL30499.1"/>
    <property type="molecule type" value="Genomic_DNA"/>
</dbReference>
<dbReference type="RefSeq" id="WP_012619374.1">
    <property type="nucleotide sequence ID" value="NC_011833.1"/>
</dbReference>
<dbReference type="SMR" id="B8D8S7"/>
<dbReference type="KEGG" id="bap:BUAP5A_124"/>
<dbReference type="HOGENOM" id="CLU_054919_3_2_6"/>
<dbReference type="OrthoDB" id="9806014at2"/>
<dbReference type="Proteomes" id="UP000006904">
    <property type="component" value="Chromosome"/>
</dbReference>
<dbReference type="GO" id="GO:0005829">
    <property type="term" value="C:cytosol"/>
    <property type="evidence" value="ECO:0007669"/>
    <property type="project" value="TreeGrafter"/>
</dbReference>
<dbReference type="GO" id="GO:0016020">
    <property type="term" value="C:membrane"/>
    <property type="evidence" value="ECO:0007669"/>
    <property type="project" value="TreeGrafter"/>
</dbReference>
<dbReference type="GO" id="GO:0043022">
    <property type="term" value="F:ribosome binding"/>
    <property type="evidence" value="ECO:0007669"/>
    <property type="project" value="TreeGrafter"/>
</dbReference>
<dbReference type="GO" id="GO:0003743">
    <property type="term" value="F:translation initiation factor activity"/>
    <property type="evidence" value="ECO:0007669"/>
    <property type="project" value="UniProtKB-UniRule"/>
</dbReference>
<dbReference type="GO" id="GO:0032790">
    <property type="term" value="P:ribosome disassembly"/>
    <property type="evidence" value="ECO:0007669"/>
    <property type="project" value="TreeGrafter"/>
</dbReference>
<dbReference type="FunFam" id="3.10.20.80:FF:000001">
    <property type="entry name" value="Translation initiation factor IF-3"/>
    <property type="match status" value="1"/>
</dbReference>
<dbReference type="FunFam" id="3.30.110.10:FF:000001">
    <property type="entry name" value="Translation initiation factor IF-3"/>
    <property type="match status" value="1"/>
</dbReference>
<dbReference type="Gene3D" id="3.30.110.10">
    <property type="entry name" value="Translation initiation factor 3 (IF-3), C-terminal domain"/>
    <property type="match status" value="1"/>
</dbReference>
<dbReference type="Gene3D" id="3.10.20.80">
    <property type="entry name" value="Translation initiation factor 3 (IF-3), N-terminal domain"/>
    <property type="match status" value="1"/>
</dbReference>
<dbReference type="HAMAP" id="MF_00080">
    <property type="entry name" value="IF_3"/>
    <property type="match status" value="1"/>
</dbReference>
<dbReference type="InterPro" id="IPR036788">
    <property type="entry name" value="T_IF-3_C_sf"/>
</dbReference>
<dbReference type="InterPro" id="IPR036787">
    <property type="entry name" value="T_IF-3_N_sf"/>
</dbReference>
<dbReference type="InterPro" id="IPR019813">
    <property type="entry name" value="Translation_initiation_fac3_CS"/>
</dbReference>
<dbReference type="InterPro" id="IPR001288">
    <property type="entry name" value="Translation_initiation_fac_3"/>
</dbReference>
<dbReference type="InterPro" id="IPR019815">
    <property type="entry name" value="Translation_initiation_fac_3_C"/>
</dbReference>
<dbReference type="InterPro" id="IPR019814">
    <property type="entry name" value="Translation_initiation_fac_3_N"/>
</dbReference>
<dbReference type="NCBIfam" id="TIGR00168">
    <property type="entry name" value="infC"/>
    <property type="match status" value="1"/>
</dbReference>
<dbReference type="PANTHER" id="PTHR10938">
    <property type="entry name" value="TRANSLATION INITIATION FACTOR IF-3"/>
    <property type="match status" value="1"/>
</dbReference>
<dbReference type="PANTHER" id="PTHR10938:SF0">
    <property type="entry name" value="TRANSLATION INITIATION FACTOR IF-3, MITOCHONDRIAL"/>
    <property type="match status" value="1"/>
</dbReference>
<dbReference type="Pfam" id="PF00707">
    <property type="entry name" value="IF3_C"/>
    <property type="match status" value="1"/>
</dbReference>
<dbReference type="Pfam" id="PF05198">
    <property type="entry name" value="IF3_N"/>
    <property type="match status" value="1"/>
</dbReference>
<dbReference type="SUPFAM" id="SSF55200">
    <property type="entry name" value="Translation initiation factor IF3, C-terminal domain"/>
    <property type="match status" value="1"/>
</dbReference>
<dbReference type="SUPFAM" id="SSF54364">
    <property type="entry name" value="Translation initiation factor IF3, N-terminal domain"/>
    <property type="match status" value="1"/>
</dbReference>
<dbReference type="PROSITE" id="PS00938">
    <property type="entry name" value="IF3"/>
    <property type="match status" value="1"/>
</dbReference>